<protein>
    <recommendedName>
        <fullName evidence="1">UDP-3-O-acylglucosamine N-acyltransferase</fullName>
        <ecNumber evidence="1">2.3.1.191</ecNumber>
    </recommendedName>
</protein>
<proteinExistence type="inferred from homology"/>
<organism>
    <name type="scientific">Burkholderia cenocepacia (strain ATCC BAA-245 / DSM 16553 / LMG 16656 / NCTC 13227 / J2315 / CF5610)</name>
    <name type="common">Burkholderia cepacia (strain J2315)</name>
    <dbReference type="NCBI Taxonomy" id="216591"/>
    <lineage>
        <taxon>Bacteria</taxon>
        <taxon>Pseudomonadati</taxon>
        <taxon>Pseudomonadota</taxon>
        <taxon>Betaproteobacteria</taxon>
        <taxon>Burkholderiales</taxon>
        <taxon>Burkholderiaceae</taxon>
        <taxon>Burkholderia</taxon>
        <taxon>Burkholderia cepacia complex</taxon>
    </lineage>
</organism>
<gene>
    <name evidence="1" type="primary">lpxD</name>
    <name type="ordered locus">BceJ2315_20430</name>
    <name type="ORF">BCAL2081</name>
</gene>
<dbReference type="EC" id="2.3.1.191" evidence="1"/>
<dbReference type="EMBL" id="AM747720">
    <property type="protein sequence ID" value="CAR52381.1"/>
    <property type="molecule type" value="Genomic_DNA"/>
</dbReference>
<dbReference type="RefSeq" id="WP_006483817.1">
    <property type="nucleotide sequence ID" value="NC_011000.1"/>
</dbReference>
<dbReference type="SMR" id="B4ECM1"/>
<dbReference type="GeneID" id="56558571"/>
<dbReference type="KEGG" id="bcj:BCAL2081"/>
<dbReference type="eggNOG" id="COG1044">
    <property type="taxonomic scope" value="Bacteria"/>
</dbReference>
<dbReference type="HOGENOM" id="CLU_049865_0_0_4"/>
<dbReference type="BioCyc" id="BCEN216591:G1G1V-2281-MONOMER"/>
<dbReference type="UniPathway" id="UPA00973"/>
<dbReference type="Proteomes" id="UP000001035">
    <property type="component" value="Chromosome 1"/>
</dbReference>
<dbReference type="GO" id="GO:0016020">
    <property type="term" value="C:membrane"/>
    <property type="evidence" value="ECO:0007669"/>
    <property type="project" value="GOC"/>
</dbReference>
<dbReference type="GO" id="GO:0016410">
    <property type="term" value="F:N-acyltransferase activity"/>
    <property type="evidence" value="ECO:0007669"/>
    <property type="project" value="InterPro"/>
</dbReference>
<dbReference type="GO" id="GO:0009245">
    <property type="term" value="P:lipid A biosynthetic process"/>
    <property type="evidence" value="ECO:0007669"/>
    <property type="project" value="UniProtKB-UniRule"/>
</dbReference>
<dbReference type="CDD" id="cd03352">
    <property type="entry name" value="LbH_LpxD"/>
    <property type="match status" value="1"/>
</dbReference>
<dbReference type="Gene3D" id="1.20.5.170">
    <property type="match status" value="1"/>
</dbReference>
<dbReference type="Gene3D" id="2.160.10.10">
    <property type="entry name" value="Hexapeptide repeat proteins"/>
    <property type="match status" value="1"/>
</dbReference>
<dbReference type="Gene3D" id="3.40.1390.10">
    <property type="entry name" value="MurE/MurF, N-terminal domain"/>
    <property type="match status" value="1"/>
</dbReference>
<dbReference type="HAMAP" id="MF_00523">
    <property type="entry name" value="LpxD"/>
    <property type="match status" value="1"/>
</dbReference>
<dbReference type="InterPro" id="IPR001451">
    <property type="entry name" value="Hexapep"/>
</dbReference>
<dbReference type="InterPro" id="IPR018357">
    <property type="entry name" value="Hexapep_transf_CS"/>
</dbReference>
<dbReference type="InterPro" id="IPR007691">
    <property type="entry name" value="LpxD"/>
</dbReference>
<dbReference type="InterPro" id="IPR011004">
    <property type="entry name" value="Trimer_LpxA-like_sf"/>
</dbReference>
<dbReference type="InterPro" id="IPR020573">
    <property type="entry name" value="UDP_GlcNAc_AcTrfase_non-rep"/>
</dbReference>
<dbReference type="NCBIfam" id="TIGR01853">
    <property type="entry name" value="lipid_A_lpxD"/>
    <property type="match status" value="1"/>
</dbReference>
<dbReference type="NCBIfam" id="NF002060">
    <property type="entry name" value="PRK00892.1"/>
    <property type="match status" value="1"/>
</dbReference>
<dbReference type="PANTHER" id="PTHR43378">
    <property type="entry name" value="UDP-3-O-ACYLGLUCOSAMINE N-ACYLTRANSFERASE"/>
    <property type="match status" value="1"/>
</dbReference>
<dbReference type="PANTHER" id="PTHR43378:SF2">
    <property type="entry name" value="UDP-3-O-ACYLGLUCOSAMINE N-ACYLTRANSFERASE 1, MITOCHONDRIAL-RELATED"/>
    <property type="match status" value="1"/>
</dbReference>
<dbReference type="Pfam" id="PF00132">
    <property type="entry name" value="Hexapep"/>
    <property type="match status" value="2"/>
</dbReference>
<dbReference type="Pfam" id="PF14602">
    <property type="entry name" value="Hexapep_2"/>
    <property type="match status" value="1"/>
</dbReference>
<dbReference type="Pfam" id="PF04613">
    <property type="entry name" value="LpxD"/>
    <property type="match status" value="1"/>
</dbReference>
<dbReference type="SUPFAM" id="SSF51161">
    <property type="entry name" value="Trimeric LpxA-like enzymes"/>
    <property type="match status" value="1"/>
</dbReference>
<dbReference type="PROSITE" id="PS00101">
    <property type="entry name" value="HEXAPEP_TRANSFERASES"/>
    <property type="match status" value="3"/>
</dbReference>
<name>LPXD_BURCJ</name>
<accession>B4ECM1</accession>
<keyword id="KW-0012">Acyltransferase</keyword>
<keyword id="KW-0441">Lipid A biosynthesis</keyword>
<keyword id="KW-0444">Lipid biosynthesis</keyword>
<keyword id="KW-0443">Lipid metabolism</keyword>
<keyword id="KW-0677">Repeat</keyword>
<keyword id="KW-0808">Transferase</keyword>
<comment type="function">
    <text evidence="1">Catalyzes the N-acylation of UDP-3-O-acylglucosamine using 3-hydroxyacyl-ACP as the acyl donor. Is involved in the biosynthesis of lipid A, a phosphorylated glycolipid that anchors the lipopolysaccharide to the outer membrane of the cell.</text>
</comment>
<comment type="catalytic activity">
    <reaction evidence="1">
        <text>a UDP-3-O-[(3R)-3-hydroxyacyl]-alpha-D-glucosamine + a (3R)-hydroxyacyl-[ACP] = a UDP-2-N,3-O-bis[(3R)-3-hydroxyacyl]-alpha-D-glucosamine + holo-[ACP] + H(+)</text>
        <dbReference type="Rhea" id="RHEA:53836"/>
        <dbReference type="Rhea" id="RHEA-COMP:9685"/>
        <dbReference type="Rhea" id="RHEA-COMP:9945"/>
        <dbReference type="ChEBI" id="CHEBI:15378"/>
        <dbReference type="ChEBI" id="CHEBI:64479"/>
        <dbReference type="ChEBI" id="CHEBI:78827"/>
        <dbReference type="ChEBI" id="CHEBI:137740"/>
        <dbReference type="ChEBI" id="CHEBI:137748"/>
        <dbReference type="EC" id="2.3.1.191"/>
    </reaction>
</comment>
<comment type="pathway">
    <text evidence="1">Bacterial outer membrane biogenesis; LPS lipid A biosynthesis.</text>
</comment>
<comment type="subunit">
    <text evidence="1">Homotrimer.</text>
</comment>
<comment type="similarity">
    <text evidence="1">Belongs to the transferase hexapeptide repeat family. LpxD subfamily.</text>
</comment>
<sequence length="359" mass="36622">MALTLEELVKRFGGEIAGDAQCKVGGLAPLDQAGPQQLAFLANPKYLSQVESTRAGAVLIAPKDLEKLGAAAAGRNFIVTPNPYAYFARVAQMFIDLATPPRAAGVHPSATIDPAATVAATAVIGPHVTIEAGAVIEDGVQLDANVFVGRGTTIGAGSHFYPNASVYHGCKIGPRAIVHAGAVIGSDGFGFAPDFVGDGDARTGSWVKIPQVGGVTIGPDVEIGANTTIDRGAMADTVIEECVKIDNQVQIGHNCRIGAYTVIAGSAGIAGSTTIGRHCMIGGAAGIAGHVTLGDYVIITAKSGVSKSLPKAGIYTSAFPAVDHGEWNKSAALVRNLDKLRERIKALEAALAAQGGTHA</sequence>
<evidence type="ECO:0000255" key="1">
    <source>
        <dbReference type="HAMAP-Rule" id="MF_00523"/>
    </source>
</evidence>
<reference key="1">
    <citation type="journal article" date="2009" name="J. Bacteriol.">
        <title>The genome of Burkholderia cenocepacia J2315, an epidemic pathogen of cystic fibrosis patients.</title>
        <authorList>
            <person name="Holden M.T."/>
            <person name="Seth-Smith H.M."/>
            <person name="Crossman L.C."/>
            <person name="Sebaihia M."/>
            <person name="Bentley S.D."/>
            <person name="Cerdeno-Tarraga A.M."/>
            <person name="Thomson N.R."/>
            <person name="Bason N."/>
            <person name="Quail M.A."/>
            <person name="Sharp S."/>
            <person name="Cherevach I."/>
            <person name="Churcher C."/>
            <person name="Goodhead I."/>
            <person name="Hauser H."/>
            <person name="Holroyd N."/>
            <person name="Mungall K."/>
            <person name="Scott P."/>
            <person name="Walker D."/>
            <person name="White B."/>
            <person name="Rose H."/>
            <person name="Iversen P."/>
            <person name="Mil-Homens D."/>
            <person name="Rocha E.P."/>
            <person name="Fialho A.M."/>
            <person name="Baldwin A."/>
            <person name="Dowson C."/>
            <person name="Barrell B.G."/>
            <person name="Govan J.R."/>
            <person name="Vandamme P."/>
            <person name="Hart C.A."/>
            <person name="Mahenthiralingam E."/>
            <person name="Parkhill J."/>
        </authorList>
    </citation>
    <scope>NUCLEOTIDE SEQUENCE [LARGE SCALE GENOMIC DNA]</scope>
    <source>
        <strain>ATCC BAA-245 / DSM 16553 / LMG 16656 / NCTC 13227 / J2315 / CF5610</strain>
    </source>
</reference>
<feature type="chain" id="PRO_1000127665" description="UDP-3-O-acylglucosamine N-acyltransferase">
    <location>
        <begin position="1"/>
        <end position="359"/>
    </location>
</feature>
<feature type="active site" description="Proton acceptor" evidence="1">
    <location>
        <position position="253"/>
    </location>
</feature>